<feature type="chain" id="PRO_0000289226" description="RNA cytosine-C(5)-methyltransferase NSUN2">
    <location>
        <begin position="1"/>
        <end position="698"/>
    </location>
</feature>
<feature type="region of interest" description="Disordered" evidence="4">
    <location>
        <begin position="1"/>
        <end position="28"/>
    </location>
</feature>
<feature type="region of interest" description="Disordered" evidence="4">
    <location>
        <begin position="472"/>
        <end position="496"/>
    </location>
</feature>
<feature type="compositionally biased region" description="Basic residues" evidence="4">
    <location>
        <begin position="1"/>
        <end position="10"/>
    </location>
</feature>
<feature type="compositionally biased region" description="Basic and acidic residues" evidence="4">
    <location>
        <begin position="11"/>
        <end position="28"/>
    </location>
</feature>
<feature type="compositionally biased region" description="Polar residues" evidence="4">
    <location>
        <begin position="482"/>
        <end position="493"/>
    </location>
</feature>
<feature type="active site" description="Nucleophile" evidence="3">
    <location>
        <position position="319"/>
    </location>
</feature>
<feature type="binding site" evidence="3">
    <location>
        <begin position="182"/>
        <end position="188"/>
    </location>
    <ligand>
        <name>S-adenosyl-L-methionine</name>
        <dbReference type="ChEBI" id="CHEBI:59789"/>
    </ligand>
</feature>
<feature type="binding site" evidence="3">
    <location>
        <position position="213"/>
    </location>
    <ligand>
        <name>S-adenosyl-L-methionine</name>
        <dbReference type="ChEBI" id="CHEBI:59789"/>
    </ligand>
</feature>
<feature type="binding site" evidence="3">
    <location>
        <position position="240"/>
    </location>
    <ligand>
        <name>S-adenosyl-L-methionine</name>
        <dbReference type="ChEBI" id="CHEBI:59789"/>
    </ligand>
</feature>
<feature type="binding site" evidence="3">
    <location>
        <position position="266"/>
    </location>
    <ligand>
        <name>S-adenosyl-L-methionine</name>
        <dbReference type="ChEBI" id="CHEBI:59789"/>
    </ligand>
</feature>
<comment type="function">
    <text evidence="1">RNA cytosine C(5)-methyltransferase that methylates cytosine to 5-methylcytosine (m5C) in various RNAs, such as tRNAs, mRNAs and some long non-coding RNAs (lncRNAs). Involved in various processes, such as epidermal stem cell differentiation, testis differentiation and maternal to zygotic transition during early development: acts by increasing protein synthesis; cytosine C(5)-methylation promoting tRNA stability and preventing mRNA decay. Methylates cytosine to 5-methylcytosine (m5C) at positions 34 and 48 of intron-containing tRNA(Leu)(CAA) precursors, and at positions 48, 49 and 50 of tRNA(Gly)(GCC) precursors. tRNA methylation is required generation of RNA fragments derived from tRNAs (tRFs). Also mediates C(5)-methylation of mitochondrial tRNAs. Catalyzes cytosine C(5)-methylation of mRNAs, leading to stabilize them and prevent mRNA decay. Cytosine C(5)-methylation of mRNAs also regulates mRNA export. Also mediates cytosine C(5)-methylation of non-coding RNAs, such as vault RNAs (vtRNAs), promoting their processing into regulatory small RNAs. Required for proper spindle assembly and chromosome segregation, independently of its methyltransferase activity.</text>
</comment>
<comment type="catalytic activity">
    <reaction evidence="1">
        <text>cytidine(48) in tRNA + S-adenosyl-L-methionine = 5-methylcytidine(48) in tRNA + S-adenosyl-L-homocysteine + H(+)</text>
        <dbReference type="Rhea" id="RHEA:42948"/>
        <dbReference type="Rhea" id="RHEA-COMP:10293"/>
        <dbReference type="Rhea" id="RHEA-COMP:10297"/>
        <dbReference type="ChEBI" id="CHEBI:15378"/>
        <dbReference type="ChEBI" id="CHEBI:57856"/>
        <dbReference type="ChEBI" id="CHEBI:59789"/>
        <dbReference type="ChEBI" id="CHEBI:74483"/>
        <dbReference type="ChEBI" id="CHEBI:82748"/>
    </reaction>
    <physiologicalReaction direction="left-to-right" evidence="1">
        <dbReference type="Rhea" id="RHEA:42949"/>
    </physiologicalReaction>
</comment>
<comment type="catalytic activity">
    <reaction evidence="1">
        <text>cytidine(49) in tRNA + S-adenosyl-L-methionine = 5-methylcytidine(49) in tRNA + S-adenosyl-L-homocysteine + H(+)</text>
        <dbReference type="Rhea" id="RHEA:42952"/>
        <dbReference type="Rhea" id="RHEA-COMP:10294"/>
        <dbReference type="Rhea" id="RHEA-COMP:10385"/>
        <dbReference type="ChEBI" id="CHEBI:15378"/>
        <dbReference type="ChEBI" id="CHEBI:57856"/>
        <dbReference type="ChEBI" id="CHEBI:59789"/>
        <dbReference type="ChEBI" id="CHEBI:74483"/>
        <dbReference type="ChEBI" id="CHEBI:82748"/>
    </reaction>
    <physiologicalReaction direction="left-to-right" evidence="1">
        <dbReference type="Rhea" id="RHEA:42953"/>
    </physiologicalReaction>
</comment>
<comment type="catalytic activity">
    <reaction evidence="1">
        <text>cytidine(50) in tRNA + S-adenosyl-L-methionine = 5-methylcytidine(50) in tRNA + S-adenosyl-L-homocysteine + H(+)</text>
        <dbReference type="Rhea" id="RHEA:61488"/>
        <dbReference type="Rhea" id="RHEA-COMP:15838"/>
        <dbReference type="Rhea" id="RHEA-COMP:15839"/>
        <dbReference type="ChEBI" id="CHEBI:15378"/>
        <dbReference type="ChEBI" id="CHEBI:57856"/>
        <dbReference type="ChEBI" id="CHEBI:59789"/>
        <dbReference type="ChEBI" id="CHEBI:74483"/>
        <dbReference type="ChEBI" id="CHEBI:82748"/>
    </reaction>
    <physiologicalReaction direction="left-to-right" evidence="1">
        <dbReference type="Rhea" id="RHEA:61489"/>
    </physiologicalReaction>
</comment>
<comment type="catalytic activity">
    <reaction evidence="1">
        <text>cytidine(34) in tRNA precursor + S-adenosyl-L-methionine = 5-methylcytidine(34) in tRNA precursor + S-adenosyl-L-homocysteine + H(+)</text>
        <dbReference type="Rhea" id="RHEA:42940"/>
        <dbReference type="Rhea" id="RHEA-COMP:10291"/>
        <dbReference type="Rhea" id="RHEA-COMP:10295"/>
        <dbReference type="ChEBI" id="CHEBI:15378"/>
        <dbReference type="ChEBI" id="CHEBI:57856"/>
        <dbReference type="ChEBI" id="CHEBI:59789"/>
        <dbReference type="ChEBI" id="CHEBI:74483"/>
        <dbReference type="ChEBI" id="CHEBI:82748"/>
        <dbReference type="EC" id="2.1.1.203"/>
    </reaction>
    <physiologicalReaction direction="left-to-right" evidence="1">
        <dbReference type="Rhea" id="RHEA:42941"/>
    </physiologicalReaction>
</comment>
<comment type="catalytic activity">
    <reaction evidence="1">
        <text>a cytidine in mRNA + S-adenosyl-L-methionine = a 5-methylcytidine in mRNA + S-adenosyl-L-homocysteine + H(+)</text>
        <dbReference type="Rhea" id="RHEA:61464"/>
        <dbReference type="Rhea" id="RHEA-COMP:15145"/>
        <dbReference type="Rhea" id="RHEA-COMP:15826"/>
        <dbReference type="ChEBI" id="CHEBI:15378"/>
        <dbReference type="ChEBI" id="CHEBI:57856"/>
        <dbReference type="ChEBI" id="CHEBI:59789"/>
        <dbReference type="ChEBI" id="CHEBI:74483"/>
        <dbReference type="ChEBI" id="CHEBI:82748"/>
    </reaction>
    <physiologicalReaction direction="left-to-right" evidence="1">
        <dbReference type="Rhea" id="RHEA:61465"/>
    </physiologicalReaction>
</comment>
<comment type="subcellular location">
    <subcellularLocation>
        <location evidence="1">Nucleus</location>
        <location evidence="1">Nucleolus</location>
    </subcellularLocation>
    <subcellularLocation>
        <location evidence="1">Cytoplasm</location>
    </subcellularLocation>
    <subcellularLocation>
        <location evidence="1">Mitochondrion</location>
    </subcellularLocation>
    <subcellularLocation>
        <location evidence="1">Cytoplasm</location>
        <location evidence="1">Cytoskeleton</location>
        <location evidence="1">Spindle</location>
    </subcellularLocation>
    <subcellularLocation>
        <location evidence="2">Secreted</location>
        <location evidence="2">Extracellular exosome</location>
    </subcellularLocation>
</comment>
<comment type="similarity">
    <text evidence="3">Belongs to the class I-like SAM-binding methyltransferase superfamily. RsmB/NOP family. TRM4 subfamily.</text>
</comment>
<organism>
    <name type="scientific">Xenopus laevis</name>
    <name type="common">African clawed frog</name>
    <dbReference type="NCBI Taxonomy" id="8355"/>
    <lineage>
        <taxon>Eukaryota</taxon>
        <taxon>Metazoa</taxon>
        <taxon>Chordata</taxon>
        <taxon>Craniata</taxon>
        <taxon>Vertebrata</taxon>
        <taxon>Euteleostomi</taxon>
        <taxon>Amphibia</taxon>
        <taxon>Batrachia</taxon>
        <taxon>Anura</taxon>
        <taxon>Pipoidea</taxon>
        <taxon>Pipidae</taxon>
        <taxon>Xenopodinae</taxon>
        <taxon>Xenopus</taxon>
        <taxon>Xenopus</taxon>
    </lineage>
</organism>
<sequence length="698" mass="80051">MGRKNRRNRQRRTEQRSPAEEERRKAREQAAWEGGYPEIIKENKLFEHYYQELKIVPDGEWDKFMDALREPLPATIRITGYKSHAKEILHCLKEKYFKELPDIEVDGQKIEAPQPLSWYPEELAWHTNLSRKIIRKSPELEKFHQFLVSETESGNISRQEAVSMIPPVLLNVQPHHKILDMCAAPGSKTAQIIEMLHADMNVPFPEGFVIANDVDNKRCYLLVHQAKRLNSPCIMVVNHDASSIPRLLIENNGSREVLYYDRILCDVPCSGDGTMRKNIDVWKKWTTLNSLQLHGLQIRIATRGVEQLAEGGRMVYSTCSLNPVEDEAVIVSLLDKSEGSLELADVASELPGLKWMPGITQWRVMTKEGQWFEKWEDVPTSRHTQIRPTMFPLKDEEKLKSMNLNRCMRILPHHQNTGGFFVAVLIKKAPMPWNKRQPKLQRRPPVSVCDASVAPEIVKAVADISAIADEPAVDAENGETKPCTNQSGSSKTDSVCCPPPSKKMKLFGFKEDPFVFLSEDDPIFEPIQKFYALDPSFPKKNLLTRTQEGKKRQLYMVSKELRNVLLHNSEKMKVINTGIKVLCRNNDGEQYGCAYRLAQEGIYSLYPFINARILTVSVEDIKVLLTQENPFLSKFSKETQKQANNLDMGSIVLKYEPDPQQPETLQCPIVLCGWRGKTSIRSFVFFLHRINLVQWIFI</sequence>
<name>NSUN2_XENLA</name>
<reference key="1">
    <citation type="submission" date="2005-06" db="EMBL/GenBank/DDBJ databases">
        <authorList>
            <consortium name="NIH - Xenopus Gene Collection (XGC) project"/>
        </authorList>
    </citation>
    <scope>NUCLEOTIDE SEQUENCE [LARGE SCALE MRNA]</scope>
    <source>
        <tissue>Egg</tissue>
    </source>
</reference>
<keyword id="KW-0963">Cytoplasm</keyword>
<keyword id="KW-0206">Cytoskeleton</keyword>
<keyword id="KW-0489">Methyltransferase</keyword>
<keyword id="KW-0496">Mitochondrion</keyword>
<keyword id="KW-0539">Nucleus</keyword>
<keyword id="KW-0597">Phosphoprotein</keyword>
<keyword id="KW-1185">Reference proteome</keyword>
<keyword id="KW-0694">RNA-binding</keyword>
<keyword id="KW-0949">S-adenosyl-L-methionine</keyword>
<keyword id="KW-0964">Secreted</keyword>
<keyword id="KW-0808">Transferase</keyword>
<keyword id="KW-0819">tRNA processing</keyword>
<keyword id="KW-0820">tRNA-binding</keyword>
<evidence type="ECO:0000250" key="1">
    <source>
        <dbReference type="UniProtKB" id="Q08J23"/>
    </source>
</evidence>
<evidence type="ECO:0000250" key="2">
    <source>
        <dbReference type="UniProtKB" id="Q1HFZ0"/>
    </source>
</evidence>
<evidence type="ECO:0000255" key="3">
    <source>
        <dbReference type="PROSITE-ProRule" id="PRU01023"/>
    </source>
</evidence>
<evidence type="ECO:0000256" key="4">
    <source>
        <dbReference type="SAM" id="MobiDB-lite"/>
    </source>
</evidence>
<evidence type="ECO:0000305" key="5"/>
<accession>Q4V7N2</accession>
<protein>
    <recommendedName>
        <fullName evidence="5">RNA cytosine-C(5)-methyltransferase NSUN2</fullName>
        <ecNumber evidence="1">2.1.1.-</ecNumber>
    </recommendedName>
    <alternativeName>
        <fullName evidence="1">NOL1/NOP2/Sun domain family member 2</fullName>
    </alternativeName>
    <alternativeName>
        <fullName evidence="5">mRNA cytosine C(5)-methyltransferase</fullName>
        <ecNumber evidence="1">2.1.1.-</ecNumber>
    </alternativeName>
    <alternativeName>
        <fullName evidence="5">tRNA cytosine C(5)-methyltransferase</fullName>
        <ecNumber evidence="1">2.1.1.-</ecNumber>
        <ecNumber evidence="1">2.1.1.203</ecNumber>
    </alternativeName>
</protein>
<dbReference type="EC" id="2.1.1.-" evidence="1"/>
<dbReference type="EC" id="2.1.1.203" evidence="1"/>
<dbReference type="EMBL" id="BC097814">
    <property type="protein sequence ID" value="AAH97814.1"/>
    <property type="molecule type" value="mRNA"/>
</dbReference>
<dbReference type="RefSeq" id="NP_001084513.1">
    <property type="nucleotide sequence ID" value="NM_001091044.1"/>
</dbReference>
<dbReference type="SMR" id="Q4V7N2"/>
<dbReference type="BioGRID" id="100882">
    <property type="interactions" value="1"/>
</dbReference>
<dbReference type="DNASU" id="414460"/>
<dbReference type="GeneID" id="414460"/>
<dbReference type="KEGG" id="xla:414460"/>
<dbReference type="AGR" id="Xenbase:XB-GENE-962628"/>
<dbReference type="CTD" id="414460"/>
<dbReference type="Xenbase" id="XB-GENE-962628">
    <property type="gene designation" value="nsun2.S"/>
</dbReference>
<dbReference type="OrthoDB" id="6093671at2759"/>
<dbReference type="CD-CODE" id="78E86D56">
    <property type="entry name" value="Mitochondrial cloud"/>
</dbReference>
<dbReference type="Proteomes" id="UP000186698">
    <property type="component" value="Chromosome 6S"/>
</dbReference>
<dbReference type="Bgee" id="414460">
    <property type="expression patterns" value="Expressed in egg cell and 19 other cell types or tissues"/>
</dbReference>
<dbReference type="GO" id="GO:0005737">
    <property type="term" value="C:cytoplasm"/>
    <property type="evidence" value="ECO:0000318"/>
    <property type="project" value="GO_Central"/>
</dbReference>
<dbReference type="GO" id="GO:0070062">
    <property type="term" value="C:extracellular exosome"/>
    <property type="evidence" value="ECO:0000250"/>
    <property type="project" value="UniProtKB"/>
</dbReference>
<dbReference type="GO" id="GO:0005739">
    <property type="term" value="C:mitochondrion"/>
    <property type="evidence" value="ECO:0000250"/>
    <property type="project" value="UniProtKB"/>
</dbReference>
<dbReference type="GO" id="GO:0005730">
    <property type="term" value="C:nucleolus"/>
    <property type="evidence" value="ECO:0007669"/>
    <property type="project" value="UniProtKB-SubCell"/>
</dbReference>
<dbReference type="GO" id="GO:0005634">
    <property type="term" value="C:nucleus"/>
    <property type="evidence" value="ECO:0000318"/>
    <property type="project" value="GO_Central"/>
</dbReference>
<dbReference type="GO" id="GO:0005819">
    <property type="term" value="C:spindle"/>
    <property type="evidence" value="ECO:0007669"/>
    <property type="project" value="UniProtKB-SubCell"/>
</dbReference>
<dbReference type="GO" id="GO:0062152">
    <property type="term" value="F:mRNA (cytidine-5-)-methyltransferase activity"/>
    <property type="evidence" value="ECO:0000250"/>
    <property type="project" value="UniProtKB"/>
</dbReference>
<dbReference type="GO" id="GO:0016428">
    <property type="term" value="F:tRNA (cytidine-5-)-methyltransferase activity"/>
    <property type="evidence" value="ECO:0000250"/>
    <property type="project" value="UniProtKB"/>
</dbReference>
<dbReference type="GO" id="GO:0000049">
    <property type="term" value="F:tRNA binding"/>
    <property type="evidence" value="ECO:0000318"/>
    <property type="project" value="GO_Central"/>
</dbReference>
<dbReference type="GO" id="GO:0010793">
    <property type="term" value="P:regulation of mRNA export from nucleus"/>
    <property type="evidence" value="ECO:0000250"/>
    <property type="project" value="UniProtKB"/>
</dbReference>
<dbReference type="GO" id="GO:2000736">
    <property type="term" value="P:regulation of stem cell differentiation"/>
    <property type="evidence" value="ECO:0000250"/>
    <property type="project" value="UniProtKB"/>
</dbReference>
<dbReference type="GO" id="GO:0030488">
    <property type="term" value="P:tRNA methylation"/>
    <property type="evidence" value="ECO:0000250"/>
    <property type="project" value="UniProtKB"/>
</dbReference>
<dbReference type="GO" id="GO:0036416">
    <property type="term" value="P:tRNA stabilization"/>
    <property type="evidence" value="ECO:0000250"/>
    <property type="project" value="UniProtKB"/>
</dbReference>
<dbReference type="Gene3D" id="3.40.50.150">
    <property type="entry name" value="Vaccinia Virus protein VP39"/>
    <property type="match status" value="1"/>
</dbReference>
<dbReference type="InterPro" id="IPR049560">
    <property type="entry name" value="MeTrfase_RsmB-F_NOP2_cat"/>
</dbReference>
<dbReference type="InterPro" id="IPR001678">
    <property type="entry name" value="MeTrfase_RsmB-F_NOP2_dom"/>
</dbReference>
<dbReference type="InterPro" id="IPR023267">
    <property type="entry name" value="RCMT"/>
</dbReference>
<dbReference type="InterPro" id="IPR023270">
    <property type="entry name" value="RCMT_NCL1"/>
</dbReference>
<dbReference type="InterPro" id="IPR029063">
    <property type="entry name" value="SAM-dependent_MTases_sf"/>
</dbReference>
<dbReference type="PANTHER" id="PTHR22808">
    <property type="entry name" value="NCL1 YEAST -RELATED NOL1/NOP2/FMU SUN DOMAIN-CONTAINING"/>
    <property type="match status" value="1"/>
</dbReference>
<dbReference type="PANTHER" id="PTHR22808:SF1">
    <property type="entry name" value="RNA CYTOSINE-C(5)-METHYLTRANSFERASE NSUN2-RELATED"/>
    <property type="match status" value="1"/>
</dbReference>
<dbReference type="Pfam" id="PF01189">
    <property type="entry name" value="Methyltr_RsmB-F"/>
    <property type="match status" value="1"/>
</dbReference>
<dbReference type="Pfam" id="PF25376">
    <property type="entry name" value="Pre-PUA_NSUN2"/>
    <property type="match status" value="1"/>
</dbReference>
<dbReference type="Pfam" id="PF25378">
    <property type="entry name" value="PUA_NSUN2"/>
    <property type="match status" value="1"/>
</dbReference>
<dbReference type="PRINTS" id="PR02008">
    <property type="entry name" value="RCMTFAMILY"/>
</dbReference>
<dbReference type="PRINTS" id="PR02011">
    <property type="entry name" value="RCMTNCL1"/>
</dbReference>
<dbReference type="SUPFAM" id="SSF53335">
    <property type="entry name" value="S-adenosyl-L-methionine-dependent methyltransferases"/>
    <property type="match status" value="1"/>
</dbReference>
<dbReference type="PROSITE" id="PS51686">
    <property type="entry name" value="SAM_MT_RSMB_NOP"/>
    <property type="match status" value="1"/>
</dbReference>
<proteinExistence type="evidence at transcript level"/>
<gene>
    <name evidence="1" type="primary">nsun2</name>
</gene>